<name>FMN2_MOUSE</name>
<accession>Q9JL04</accession>
<accession>Q505D3</accession>
<sequence length="1578" mass="167387">MGNQDGKLKRSAGDASHEGGGAEDAAGPRDAEITKKASGSKKALGKHGKGGGGSGETSKKKSKSDSRASVFSNLRIRKNLTKGKGACDSREDVLDSQALPIGELDSAHSIVTKTPDLSLSAEETGLSDTECADPFEVIHPGASRPAEAGVGIQATAEDLETAAGAQDGQRTSSGSDTDIYSFHSATEQEDLLSDIQQAIRLQQQQQQKLLLQDSEEPAAPPTAISPQPGAFLGLDQFLLGPRSEAEKDTVQALPVRPDLPETTKSLVPEHPPSSGSHLTSETPGYATAPSAVTDSLSSPAFTFPEAGPGEGAAGVPVAGTGDTDEECEEDAFEDAPRGSPGEEWVPEVEEASQRLEKEPEEGMRESITSAVVSLPGSPAPSPRCFKPYPLITPCYIKTTTRQLSSPNHSPSQSPNQSPRIKKRPDPSVSRSSRTALASAAAPAKKHRLEGGLTGGLSRSADWTEELGVRTPGAGGSVHLLGRGATADDSGGGSPVLAAKAPGAPATADGFQNVFTGRTLLEKLFSQQENGPPEEAEKFCSRIIAMGLLLPFSDCFREPCNQNAGSSSAPFDQDQLYTWAAVSQPTHSMDYSEGQFPRREPSMWPSSKLPEEEPSPKDVDTEPKSSILESPKKCSNGVQQEVFDVKSEGQATVIQQLEQTIEDLRTKIAELEKQYPALDLEGPRGLSGLENGLTASADVSLDALVLHGKVAQPPRTLEAKSIQTSPTEEGRILTLPPPKAPPEGLLGSPAAASGESALLTSPSGPQTKFCSEISLIVSPRRISVQLDAQQIQSASQLPPPPPLLGSDSQGQPSQPSLHTESETSHEHSVSSSFGNNCNVPPAPPLPCTESSSFMPGLGMAIPPPPCLSDITVPALPSPTAPALQFSNLQGPEMLPAPPQPPPLPGLGVPPPPPAPPLPGMGIPPPPPLPGMGIPPPPPLPGMGISPLPPLPGMGIPPPPPLPGVGIPPPPPLPGVGIPPPPPLPGVGIPPPPPLPGVGIPPPPPLPGVGIPPPPPLPGVGIPPPPPLPGVGIPPPPPLPGVGIPPPPPLPGSGIPPPPALPGVAIPPPPPLPGMGVPPPAPPPPGAGIPPPPLLPGSGPPHSSQVGSSTLPAAPQGCGFLFPPLPTGLFGLGMNQDRVARKQLIEPCRPMKPLYWTRIQLHSKRDSSPSLIWEKIEEPSIDCHEFEELFSKTAVKERKKPISDTISKTKAKQVVKLLSNKRSQAVGILMSSLHLDMKDIQHAVVNLDNSVVDLETLQALYENRAQSDELEKIEKHSRSSKDKENAKSLDKPEQFLYELSLIPNFSERVFCILFQSTFSESICSIRRKLELLQKLCETLKNGPGVMQVLGLVLAFGNYMNAGNKTRGQADGFGLDILPKLKDVKSSDNSRSLLSYIVSYYLRNFDEDAGKEQCVFPLAEPQELFQASQMKFEDFQKDLRKLKKDLKACEAEAGKVYQVSSAEHMQPFKENMEQFISQAKIDQESQEAALTETHKCFLETTAYYFMKPKLGEKEVSPNVFFSVWHEFSSDFKDAWKKENKLILQERVKEAEEVCRQKKGKSLYKVKPRHDSGIKAKISMKT</sequence>
<organism>
    <name type="scientific">Mus musculus</name>
    <name type="common">Mouse</name>
    <dbReference type="NCBI Taxonomy" id="10090"/>
    <lineage>
        <taxon>Eukaryota</taxon>
        <taxon>Metazoa</taxon>
        <taxon>Chordata</taxon>
        <taxon>Craniata</taxon>
        <taxon>Vertebrata</taxon>
        <taxon>Euteleostomi</taxon>
        <taxon>Mammalia</taxon>
        <taxon>Eutheria</taxon>
        <taxon>Euarchontoglires</taxon>
        <taxon>Glires</taxon>
        <taxon>Rodentia</taxon>
        <taxon>Myomorpha</taxon>
        <taxon>Muroidea</taxon>
        <taxon>Muridae</taxon>
        <taxon>Murinae</taxon>
        <taxon>Mus</taxon>
        <taxon>Mus</taxon>
    </lineage>
</organism>
<feature type="chain" id="PRO_0000194889" description="Formin-2">
    <location>
        <begin position="1"/>
        <end position="1578"/>
    </location>
</feature>
<feature type="domain" description="FH1">
    <location>
        <begin position="735"/>
        <end position="1124"/>
    </location>
</feature>
<feature type="repeat" description="1">
    <location>
        <begin position="919"/>
        <end position="929"/>
    </location>
</feature>
<feature type="repeat" description="2">
    <location>
        <begin position="930"/>
        <end position="940"/>
    </location>
</feature>
<feature type="repeat" description="3">
    <location>
        <begin position="941"/>
        <end position="951"/>
    </location>
</feature>
<feature type="repeat" description="4">
    <location>
        <begin position="952"/>
        <end position="962"/>
    </location>
</feature>
<feature type="repeat" description="5">
    <location>
        <begin position="963"/>
        <end position="973"/>
    </location>
</feature>
<feature type="repeat" description="6">
    <location>
        <begin position="974"/>
        <end position="984"/>
    </location>
</feature>
<feature type="repeat" description="7">
    <location>
        <begin position="985"/>
        <end position="995"/>
    </location>
</feature>
<feature type="repeat" description="8">
    <location>
        <begin position="996"/>
        <end position="1006"/>
    </location>
</feature>
<feature type="repeat" description="9">
    <location>
        <begin position="1007"/>
        <end position="1017"/>
    </location>
</feature>
<feature type="repeat" description="10">
    <location>
        <begin position="1018"/>
        <end position="1028"/>
    </location>
</feature>
<feature type="repeat" description="11">
    <location>
        <begin position="1029"/>
        <end position="1039"/>
    </location>
</feature>
<feature type="repeat" description="12">
    <location>
        <begin position="1040"/>
        <end position="1050"/>
    </location>
</feature>
<feature type="domain" description="FH2" evidence="3">
    <location>
        <begin position="1139"/>
        <end position="1554"/>
    </location>
</feature>
<feature type="region of interest" description="Disordered" evidence="4">
    <location>
        <begin position="1"/>
        <end position="73"/>
    </location>
</feature>
<feature type="region of interest" description="Disordered" evidence="4">
    <location>
        <begin position="208"/>
        <end position="230"/>
    </location>
</feature>
<feature type="region of interest" description="Disordered" evidence="4">
    <location>
        <begin position="244"/>
        <end position="383"/>
    </location>
</feature>
<feature type="region of interest" description="Disordered" evidence="4">
    <location>
        <begin position="401"/>
        <end position="458"/>
    </location>
</feature>
<feature type="region of interest" description="Disordered" evidence="4">
    <location>
        <begin position="587"/>
        <end position="634"/>
    </location>
</feature>
<feature type="region of interest" description="Disordered" evidence="4">
    <location>
        <begin position="714"/>
        <end position="765"/>
    </location>
</feature>
<feature type="region of interest" description="Disordered" evidence="4">
    <location>
        <begin position="786"/>
        <end position="836"/>
    </location>
</feature>
<feature type="region of interest" description="Disordered" evidence="4">
    <location>
        <begin position="880"/>
        <end position="944"/>
    </location>
</feature>
<feature type="region of interest" description="12 X 11 AA tandem repeats of [MV]-G-I-P-P-P-P-P-L-P-G">
    <location>
        <begin position="919"/>
        <end position="1039"/>
    </location>
</feature>
<feature type="region of interest" description="Disordered" evidence="4">
    <location>
        <begin position="1037"/>
        <end position="1108"/>
    </location>
</feature>
<feature type="region of interest" description="Important for interaction with SPIRE1" evidence="10">
    <location>
        <begin position="1571"/>
        <end position="1578"/>
    </location>
</feature>
<feature type="coiled-coil region" evidence="2">
    <location>
        <begin position="643"/>
        <end position="683"/>
    </location>
</feature>
<feature type="coiled-coil region" evidence="2">
    <location>
        <begin position="1419"/>
        <end position="1455"/>
    </location>
</feature>
<feature type="compositionally biased region" description="Basic and acidic residues" evidence="4">
    <location>
        <begin position="1"/>
        <end position="17"/>
    </location>
</feature>
<feature type="compositionally biased region" description="Basic and acidic residues" evidence="4">
    <location>
        <begin position="26"/>
        <end position="35"/>
    </location>
</feature>
<feature type="compositionally biased region" description="Basic and acidic residues" evidence="4">
    <location>
        <begin position="57"/>
        <end position="66"/>
    </location>
</feature>
<feature type="compositionally biased region" description="Polar residues" evidence="4">
    <location>
        <begin position="273"/>
        <end position="282"/>
    </location>
</feature>
<feature type="compositionally biased region" description="Polar residues" evidence="4">
    <location>
        <begin position="290"/>
        <end position="300"/>
    </location>
</feature>
<feature type="compositionally biased region" description="Acidic residues" evidence="4">
    <location>
        <begin position="322"/>
        <end position="333"/>
    </location>
</feature>
<feature type="compositionally biased region" description="Basic and acidic residues" evidence="4">
    <location>
        <begin position="351"/>
        <end position="364"/>
    </location>
</feature>
<feature type="compositionally biased region" description="Low complexity" evidence="4">
    <location>
        <begin position="404"/>
        <end position="418"/>
    </location>
</feature>
<feature type="compositionally biased region" description="Low complexity" evidence="4">
    <location>
        <begin position="427"/>
        <end position="442"/>
    </location>
</feature>
<feature type="compositionally biased region" description="Basic and acidic residues" evidence="4">
    <location>
        <begin position="608"/>
        <end position="622"/>
    </location>
</feature>
<feature type="compositionally biased region" description="Polar residues" evidence="4">
    <location>
        <begin position="786"/>
        <end position="795"/>
    </location>
</feature>
<feature type="compositionally biased region" description="Low complexity" evidence="4">
    <location>
        <begin position="803"/>
        <end position="817"/>
    </location>
</feature>
<feature type="compositionally biased region" description="Basic and acidic residues" evidence="4">
    <location>
        <begin position="818"/>
        <end position="827"/>
    </location>
</feature>
<feature type="compositionally biased region" description="Pro residues" evidence="4">
    <location>
        <begin position="893"/>
        <end position="944"/>
    </location>
</feature>
<feature type="compositionally biased region" description="Pro residues" evidence="4">
    <location>
        <begin position="1037"/>
        <end position="1097"/>
    </location>
</feature>
<feature type="modified residue" description="Phosphoserine" evidence="13">
    <location>
        <position position="89"/>
    </location>
</feature>
<feature type="modified residue" description="Phosphoserine" evidence="13">
    <location>
        <position position="459"/>
    </location>
</feature>
<feature type="modified residue" description="Phosphoserine" evidence="13">
    <location>
        <position position="489"/>
    </location>
</feature>
<feature type="modified residue" description="Phosphoserine" evidence="13">
    <location>
        <position position="493"/>
    </location>
</feature>
<feature type="mutagenesis site" description="Strongly reduced interaction with SPIRE1." evidence="10">
    <original>K</original>
    <variation>A</variation>
    <variation>E</variation>
    <location>
        <position position="1571"/>
    </location>
</feature>
<feature type="sequence conflict" description="In Ref. 2; AAH94606." evidence="12" ref="2">
    <original>I</original>
    <variation>T</variation>
    <location>
        <position position="33"/>
    </location>
</feature>
<feature type="sequence conflict" description="In Ref. 2; AAH94606." evidence="12" ref="2">
    <original>V</original>
    <variation>M</variation>
    <location>
        <position position="348"/>
    </location>
</feature>
<feature type="sequence conflict" description="In Ref. 2; AAH94606." evidence="12" ref="2">
    <original>V</original>
    <variation>A</variation>
    <location>
        <position position="372"/>
    </location>
</feature>
<feature type="sequence conflict" description="In Ref. 2; AAH94606." evidence="12" ref="2">
    <original>RSS</original>
    <variation>PSP</variation>
    <location>
        <begin position="430"/>
        <end position="432"/>
    </location>
</feature>
<feature type="sequence conflict" description="In Ref. 2; AAH94606." evidence="12" ref="2">
    <original>L</original>
    <variation>P</variation>
    <location>
        <position position="745"/>
    </location>
</feature>
<feature type="sequence conflict" description="In Ref. 2; AAH94606." evidence="12" ref="2">
    <location>
        <begin position="936"/>
        <end position="946"/>
    </location>
</feature>
<feature type="sequence conflict" description="In Ref. 2; AAH94606." evidence="12" ref="2">
    <original>V</original>
    <variation>M</variation>
    <location>
        <position position="1040"/>
    </location>
</feature>
<feature type="sequence conflict" description="In Ref. 2; AAH94606." evidence="12" ref="2">
    <original>L</original>
    <variation>P</variation>
    <location>
        <position position="1142"/>
    </location>
</feature>
<gene>
    <name type="primary">Fmn2</name>
</gene>
<comment type="function">
    <text evidence="1 6 7 8 9 11">Actin-binding protein that is involved in actin cytoskeleton assembly and reorganization (PubMed:18848445, PubMed:21620703). Acts as an actin nucleation factor and promotes assembly of actin filaments together with SPIRE1 and SPIRE2 (PubMed:18848445, PubMed:21620703). Involved in intracellular vesicle transport along actin fibers, providing a novel link between actin cytoskeleton dynamics and intracellular transport (PubMed:21983562). Required for asymmetric spindle positioning, asymmetric oocyte division and polar body extrusion during female germ cell meiosis (PubMed:12447394, PubMed:18848445, PubMed:19062278, PubMed:21620703). Plays a role in responses to DNA damage, cellular stress and hypoxia by protecting CDKN1A against degradation, and thereby plays a role in stress-induced cell cycle arrest (By similarity). Also acts in the nucleus: together with SPIRE1 and SPIRE2, promotes assembly of nuclear actin filaments in response to DNA damage in order to facilitate movement of chromatin and repair factors after DNA damage (By similarity). Protects cells against apoptosis by protecting CDKN1A against degradation (By similarity).</text>
</comment>
<comment type="subunit">
    <text evidence="1 10">Interacts with SPIRE1 (PubMed:21705804). Binds actin (PubMed:21705804). Interacts with CDKN1A (By similarity).</text>
</comment>
<comment type="subcellular location">
    <subcellularLocation>
        <location evidence="8 9">Cytoplasm</location>
        <location evidence="8 9">Cytoskeleton</location>
    </subcellularLocation>
    <subcellularLocation>
        <location evidence="1">Cytoplasm</location>
        <location evidence="1">Cytosol</location>
    </subcellularLocation>
    <subcellularLocation>
        <location evidence="9">Cytoplasm</location>
        <location evidence="9">Perinuclear region</location>
    </subcellularLocation>
    <subcellularLocation>
        <location evidence="1">Nucleus</location>
    </subcellularLocation>
    <subcellularLocation>
        <location evidence="1">Nucleus</location>
        <location evidence="1">Nucleolus</location>
    </subcellularLocation>
    <subcellularLocation>
        <location evidence="10">Cell membrane</location>
        <topology evidence="10">Peripheral membrane protein</topology>
        <orientation evidence="10">Cytoplasmic side</orientation>
    </subcellularLocation>
    <subcellularLocation>
        <location evidence="11">Cytoplasm</location>
        <location evidence="11">Cell cortex</location>
    </subcellularLocation>
    <subcellularLocation>
        <location evidence="11">Cytoplasmic vesicle membrane</location>
        <topology evidence="11">Peripheral membrane protein</topology>
        <orientation evidence="11">Cytoplasmic side</orientation>
    </subcellularLocation>
    <text evidence="1 9 10">Colocalizes with the actin cytoskeleton (PubMed:21705804). Recruited to the membranes via its interaction with SPIRE1 (PubMed:21705804). Detected at the cleavage furrow during asymmetric oocyte division and polar body extrusion (PubMed:21620703). Accumulates in the nucleus following DNA damage (By similarity).</text>
</comment>
<comment type="tissue specificity">
    <text evidence="5 6 8">Detected in brain and in oocytes (at protein level) (PubMed:12447394, PubMed:19062278). Expressed almost exclusively in the developing and mature central nervous system (PubMed:10781961). Detected in oocytes (PubMed:12447394, PubMed:19062278).</text>
</comment>
<comment type="developmental stage">
    <text evidence="5">Expression begins at embryonic day 9.5 in the developing spinal cord and brain structures and continues in neonatal and adult brain structures including the olfactory bulb, cortex, thalamus, hypothalamus, hippocampus and cerebellum.</text>
</comment>
<comment type="disruption phenotype">
    <text evidence="6">No visible phenotype in male mice, but female mice show reduced fertility and produce at most one to three pups per litter (PubMed:12447394). Female mice display defects in asymmetric spindle positioning, asymmetric cell division and polar body extrusion during oocyte meiosis (PubMed:12447394). During early pregnancy, females present normal numbers of implantation sites, but only very few normal-looking embryos (PubMed:12447394). Most of the embryos show developmental delays and gross morphological defects, leading to embryonic death (PubMed:12447394).</text>
</comment>
<comment type="similarity">
    <text evidence="12">Belongs to the formin homology family. Cappuccino subfamily.</text>
</comment>
<protein>
    <recommendedName>
        <fullName>Formin-2</fullName>
    </recommendedName>
</protein>
<proteinExistence type="evidence at protein level"/>
<evidence type="ECO:0000250" key="1">
    <source>
        <dbReference type="UniProtKB" id="Q9NZ56"/>
    </source>
</evidence>
<evidence type="ECO:0000255" key="2"/>
<evidence type="ECO:0000255" key="3">
    <source>
        <dbReference type="PROSITE-ProRule" id="PRU00774"/>
    </source>
</evidence>
<evidence type="ECO:0000256" key="4">
    <source>
        <dbReference type="SAM" id="MobiDB-lite"/>
    </source>
</evidence>
<evidence type="ECO:0000269" key="5">
    <source>
    </source>
</evidence>
<evidence type="ECO:0000269" key="6">
    <source>
    </source>
</evidence>
<evidence type="ECO:0000269" key="7">
    <source>
    </source>
</evidence>
<evidence type="ECO:0000269" key="8">
    <source>
    </source>
</evidence>
<evidence type="ECO:0000269" key="9">
    <source>
    </source>
</evidence>
<evidence type="ECO:0000269" key="10">
    <source>
    </source>
</evidence>
<evidence type="ECO:0000269" key="11">
    <source>
    </source>
</evidence>
<evidence type="ECO:0000305" key="12"/>
<evidence type="ECO:0007744" key="13">
    <source>
    </source>
</evidence>
<dbReference type="EMBL" id="AF218940">
    <property type="protein sequence ID" value="AAF72883.1"/>
    <property type="molecule type" value="mRNA"/>
</dbReference>
<dbReference type="EMBL" id="BC094606">
    <property type="protein sequence ID" value="AAH94606.1"/>
    <property type="molecule type" value="mRNA"/>
</dbReference>
<dbReference type="CCDS" id="CCDS48459.1"/>
<dbReference type="RefSeq" id="NP_062318.2">
    <property type="nucleotide sequence ID" value="NM_019445.2"/>
</dbReference>
<dbReference type="SMR" id="Q9JL04"/>
<dbReference type="BioGRID" id="207654">
    <property type="interactions" value="3"/>
</dbReference>
<dbReference type="DIP" id="DIP-60685N"/>
<dbReference type="FunCoup" id="Q9JL04">
    <property type="interactions" value="1091"/>
</dbReference>
<dbReference type="IntAct" id="Q9JL04">
    <property type="interactions" value="2"/>
</dbReference>
<dbReference type="MINT" id="Q9JL04"/>
<dbReference type="STRING" id="10090.ENSMUSP00000030039"/>
<dbReference type="GlyGen" id="Q9JL04">
    <property type="glycosylation" value="4 sites, 1 O-linked glycan (3 sites)"/>
</dbReference>
<dbReference type="iPTMnet" id="Q9JL04"/>
<dbReference type="PhosphoSitePlus" id="Q9JL04"/>
<dbReference type="SwissPalm" id="Q9JL04"/>
<dbReference type="PaxDb" id="10090-ENSMUSP00000030039"/>
<dbReference type="PeptideAtlas" id="Q9JL04"/>
<dbReference type="ProteomicsDB" id="267605"/>
<dbReference type="Antibodypedia" id="20819">
    <property type="antibodies" value="134 antibodies from 28 providers"/>
</dbReference>
<dbReference type="DNASU" id="54418"/>
<dbReference type="Ensembl" id="ENSMUST00000030039.13">
    <property type="protein sequence ID" value="ENSMUSP00000030039.8"/>
    <property type="gene ID" value="ENSMUSG00000028354.14"/>
</dbReference>
<dbReference type="GeneID" id="54418"/>
<dbReference type="KEGG" id="mmu:54418"/>
<dbReference type="UCSC" id="uc007dtd.2">
    <property type="organism name" value="mouse"/>
</dbReference>
<dbReference type="AGR" id="MGI:1859252"/>
<dbReference type="CTD" id="56776"/>
<dbReference type="MGI" id="MGI:1859252">
    <property type="gene designation" value="Fmn2"/>
</dbReference>
<dbReference type="VEuPathDB" id="HostDB:ENSMUSG00000028354"/>
<dbReference type="eggNOG" id="KOG1922">
    <property type="taxonomic scope" value="Eukaryota"/>
</dbReference>
<dbReference type="GeneTree" id="ENSGT00940000161899"/>
<dbReference type="HOGENOM" id="CLU_002670_2_0_1"/>
<dbReference type="InParanoid" id="Q9JL04"/>
<dbReference type="OMA" id="CNQNAQS"/>
<dbReference type="OrthoDB" id="427644at2759"/>
<dbReference type="PhylomeDB" id="Q9JL04"/>
<dbReference type="TreeFam" id="TF326072"/>
<dbReference type="BioGRID-ORCS" id="54418">
    <property type="hits" value="4 hits in 77 CRISPR screens"/>
</dbReference>
<dbReference type="CD-CODE" id="CE726F99">
    <property type="entry name" value="Postsynaptic density"/>
</dbReference>
<dbReference type="ChiTaRS" id="Fmn2">
    <property type="organism name" value="mouse"/>
</dbReference>
<dbReference type="PRO" id="PR:Q9JL04"/>
<dbReference type="Proteomes" id="UP000000589">
    <property type="component" value="Chromosome 1"/>
</dbReference>
<dbReference type="RNAct" id="Q9JL04">
    <property type="molecule type" value="protein"/>
</dbReference>
<dbReference type="Bgee" id="ENSMUSG00000028354">
    <property type="expression patterns" value="Expressed in secondary oocyte and 180 other cell types or tissues"/>
</dbReference>
<dbReference type="ExpressionAtlas" id="Q9JL04">
    <property type="expression patterns" value="baseline and differential"/>
</dbReference>
<dbReference type="GO" id="GO:0005884">
    <property type="term" value="C:actin filament"/>
    <property type="evidence" value="ECO:0007669"/>
    <property type="project" value="InterPro"/>
</dbReference>
<dbReference type="GO" id="GO:0005938">
    <property type="term" value="C:cell cortex"/>
    <property type="evidence" value="ECO:0000314"/>
    <property type="project" value="UniProtKB"/>
</dbReference>
<dbReference type="GO" id="GO:0030659">
    <property type="term" value="C:cytoplasmic vesicle membrane"/>
    <property type="evidence" value="ECO:0000314"/>
    <property type="project" value="UniProtKB"/>
</dbReference>
<dbReference type="GO" id="GO:0005829">
    <property type="term" value="C:cytosol"/>
    <property type="evidence" value="ECO:0000250"/>
    <property type="project" value="UniProtKB"/>
</dbReference>
<dbReference type="GO" id="GO:0005783">
    <property type="term" value="C:endoplasmic reticulum"/>
    <property type="evidence" value="ECO:0000314"/>
    <property type="project" value="UniProtKB"/>
</dbReference>
<dbReference type="GO" id="GO:0005789">
    <property type="term" value="C:endoplasmic reticulum membrane"/>
    <property type="evidence" value="ECO:0000314"/>
    <property type="project" value="MGI"/>
</dbReference>
<dbReference type="GO" id="GO:0005902">
    <property type="term" value="C:microvillus"/>
    <property type="evidence" value="ECO:0000314"/>
    <property type="project" value="MGI"/>
</dbReference>
<dbReference type="GO" id="GO:0005730">
    <property type="term" value="C:nucleolus"/>
    <property type="evidence" value="ECO:0000250"/>
    <property type="project" value="UniProtKB"/>
</dbReference>
<dbReference type="GO" id="GO:0005634">
    <property type="term" value="C:nucleus"/>
    <property type="evidence" value="ECO:0000250"/>
    <property type="project" value="UniProtKB"/>
</dbReference>
<dbReference type="GO" id="GO:0048471">
    <property type="term" value="C:perinuclear region of cytoplasm"/>
    <property type="evidence" value="ECO:0007669"/>
    <property type="project" value="UniProtKB-SubCell"/>
</dbReference>
<dbReference type="GO" id="GO:0005886">
    <property type="term" value="C:plasma membrane"/>
    <property type="evidence" value="ECO:0007669"/>
    <property type="project" value="UniProtKB-SubCell"/>
</dbReference>
<dbReference type="GO" id="GO:0005819">
    <property type="term" value="C:spindle"/>
    <property type="evidence" value="ECO:0000314"/>
    <property type="project" value="MGI"/>
</dbReference>
<dbReference type="GO" id="GO:0003779">
    <property type="term" value="F:actin binding"/>
    <property type="evidence" value="ECO:0000250"/>
    <property type="project" value="UniProtKB"/>
</dbReference>
<dbReference type="GO" id="GO:0008017">
    <property type="term" value="F:microtubule binding"/>
    <property type="evidence" value="ECO:0007669"/>
    <property type="project" value="InterPro"/>
</dbReference>
<dbReference type="GO" id="GO:0051017">
    <property type="term" value="P:actin filament bundle assembly"/>
    <property type="evidence" value="ECO:0000315"/>
    <property type="project" value="MGI"/>
</dbReference>
<dbReference type="GO" id="GO:0045010">
    <property type="term" value="P:actin nucleation"/>
    <property type="evidence" value="ECO:0007669"/>
    <property type="project" value="InterPro"/>
</dbReference>
<dbReference type="GO" id="GO:0016477">
    <property type="term" value="P:cell migration"/>
    <property type="evidence" value="ECO:0007669"/>
    <property type="project" value="Ensembl"/>
</dbReference>
<dbReference type="GO" id="GO:0071456">
    <property type="term" value="P:cellular response to hypoxia"/>
    <property type="evidence" value="ECO:0000250"/>
    <property type="project" value="UniProtKB"/>
</dbReference>
<dbReference type="GO" id="GO:0006974">
    <property type="term" value="P:DNA damage response"/>
    <property type="evidence" value="ECO:0000250"/>
    <property type="project" value="UniProtKB"/>
</dbReference>
<dbReference type="GO" id="GO:0051295">
    <property type="term" value="P:establishment of meiotic spindle localization"/>
    <property type="evidence" value="ECO:0000315"/>
    <property type="project" value="UniProtKB"/>
</dbReference>
<dbReference type="GO" id="GO:0070649">
    <property type="term" value="P:formin-nucleated actin cable assembly"/>
    <property type="evidence" value="ECO:0000315"/>
    <property type="project" value="UniProtKB"/>
</dbReference>
<dbReference type="GO" id="GO:0051758">
    <property type="term" value="P:homologous chromosome movement towards spindle pole in meiosis I anaphase"/>
    <property type="evidence" value="ECO:0000315"/>
    <property type="project" value="BHF-UCL"/>
</dbReference>
<dbReference type="GO" id="GO:0046907">
    <property type="term" value="P:intracellular transport"/>
    <property type="evidence" value="ECO:0000315"/>
    <property type="project" value="UniProtKB"/>
</dbReference>
<dbReference type="GO" id="GO:0016344">
    <property type="term" value="P:meiotic chromosome movement towards spindle pole"/>
    <property type="evidence" value="ECO:0000315"/>
    <property type="project" value="MGI"/>
</dbReference>
<dbReference type="GO" id="GO:0043066">
    <property type="term" value="P:negative regulation of apoptotic process"/>
    <property type="evidence" value="ECO:0000250"/>
    <property type="project" value="UniProtKB"/>
</dbReference>
<dbReference type="GO" id="GO:0042177">
    <property type="term" value="P:negative regulation of protein catabolic process"/>
    <property type="evidence" value="ECO:0000250"/>
    <property type="project" value="UniProtKB"/>
</dbReference>
<dbReference type="GO" id="GO:0048477">
    <property type="term" value="P:oogenesis"/>
    <property type="evidence" value="ECO:0000315"/>
    <property type="project" value="BHF-UCL"/>
</dbReference>
<dbReference type="GO" id="GO:0040038">
    <property type="term" value="P:polar body extrusion after meiotic divisions"/>
    <property type="evidence" value="ECO:0000315"/>
    <property type="project" value="BHF-UCL"/>
</dbReference>
<dbReference type="GO" id="GO:2000781">
    <property type="term" value="P:positive regulation of double-strand break repair"/>
    <property type="evidence" value="ECO:0000250"/>
    <property type="project" value="UniProtKB"/>
</dbReference>
<dbReference type="GO" id="GO:0015031">
    <property type="term" value="P:protein transport"/>
    <property type="evidence" value="ECO:0007669"/>
    <property type="project" value="UniProtKB-KW"/>
</dbReference>
<dbReference type="GO" id="GO:0016192">
    <property type="term" value="P:vesicle-mediated transport"/>
    <property type="evidence" value="ECO:0000315"/>
    <property type="project" value="UniProtKB"/>
</dbReference>
<dbReference type="FunFam" id="1.20.58.2220:FF:000007">
    <property type="entry name" value="formin-2"/>
    <property type="match status" value="1"/>
</dbReference>
<dbReference type="Gene3D" id="1.20.58.2220">
    <property type="entry name" value="Formin, FH2 domain"/>
    <property type="match status" value="1"/>
</dbReference>
<dbReference type="InterPro" id="IPR015425">
    <property type="entry name" value="FH2_Formin"/>
</dbReference>
<dbReference type="InterPro" id="IPR042201">
    <property type="entry name" value="FH2_Formin_sf"/>
</dbReference>
<dbReference type="InterPro" id="IPR001265">
    <property type="entry name" value="Formin_Cappuccino_subfam"/>
</dbReference>
<dbReference type="PANTHER" id="PTHR45920">
    <property type="entry name" value="FORMIN HOMOLOGY 2 DOMAIN CONTAINING, ISOFORM I"/>
    <property type="match status" value="1"/>
</dbReference>
<dbReference type="PANTHER" id="PTHR45920:SF7">
    <property type="entry name" value="FORMIN-G"/>
    <property type="match status" value="1"/>
</dbReference>
<dbReference type="Pfam" id="PF02181">
    <property type="entry name" value="FH2"/>
    <property type="match status" value="1"/>
</dbReference>
<dbReference type="PRINTS" id="PR00828">
    <property type="entry name" value="FORMIN"/>
</dbReference>
<dbReference type="SMART" id="SM00498">
    <property type="entry name" value="FH2"/>
    <property type="match status" value="1"/>
</dbReference>
<dbReference type="SUPFAM" id="SSF101447">
    <property type="entry name" value="Formin homology 2 domain (FH2 domain)"/>
    <property type="match status" value="1"/>
</dbReference>
<dbReference type="PROSITE" id="PS51444">
    <property type="entry name" value="FH2"/>
    <property type="match status" value="1"/>
</dbReference>
<reference key="1">
    <citation type="journal article" date="2000" name="Mech. Dev.">
        <title>Formin-2, a novel formin homology protein of the cappuccino subfamily, is highly expressed in the developing and adult central nervous system.</title>
        <authorList>
            <person name="Leader B."/>
            <person name="Leder P."/>
        </authorList>
    </citation>
    <scope>NUCLEOTIDE SEQUENCE [MRNA]</scope>
    <scope>TISSUE SPECIFICITY</scope>
    <scope>DEVELOPMENTAL STAGE</scope>
    <source>
        <tissue>Brain</tissue>
    </source>
</reference>
<reference key="2">
    <citation type="journal article" date="2004" name="Genome Res.">
        <title>The status, quality, and expansion of the NIH full-length cDNA project: the Mammalian Gene Collection (MGC).</title>
        <authorList>
            <consortium name="The MGC Project Team"/>
        </authorList>
    </citation>
    <scope>NUCLEOTIDE SEQUENCE [LARGE SCALE MRNA]</scope>
    <source>
        <strain>C57BL/6J</strain>
        <tissue>Brain</tissue>
    </source>
</reference>
<reference key="3">
    <citation type="journal article" date="2002" name="Nat. Cell Biol.">
        <title>Formin-2, polyploidy, hypofertility and positioning of the meiotic spindle in mouse oocytes.</title>
        <authorList>
            <person name="Leader B."/>
            <person name="Lim H."/>
            <person name="Carabatsos M.J."/>
            <person name="Harrington A."/>
            <person name="Ecsedy J."/>
            <person name="Pellman D."/>
            <person name="Maas R."/>
            <person name="Leder P."/>
        </authorList>
    </citation>
    <scope>DISRUPTION PHENOTYPE</scope>
    <scope>FUNCTION</scope>
    <scope>TISSUE SPECIFICITY</scope>
</reference>
<reference key="4">
    <citation type="journal article" date="2007" name="Mol. Cell. Proteomics">
        <title>Qualitative and quantitative analyses of protein phosphorylation in naive and stimulated mouse synaptosomal preparations.</title>
        <authorList>
            <person name="Munton R.P."/>
            <person name="Tweedie-Cullen R."/>
            <person name="Livingstone-Zatchej M."/>
            <person name="Weinandy F."/>
            <person name="Waidelich M."/>
            <person name="Longo D."/>
            <person name="Gehrig P."/>
            <person name="Potthast F."/>
            <person name="Rutishauser D."/>
            <person name="Gerrits B."/>
            <person name="Panse C."/>
            <person name="Schlapbach R."/>
            <person name="Mansuy I.M."/>
        </authorList>
    </citation>
    <scope>IDENTIFICATION BY MASS SPECTROMETRY [LARGE SCALE ANALYSIS]</scope>
    <source>
        <tissue>Brain cortex</tissue>
    </source>
</reference>
<reference key="5">
    <citation type="journal article" date="2008" name="Curr. Biol.">
        <title>Spindle positioning in mouse oocytes relies on a dynamic meshwork of actin filaments.</title>
        <authorList>
            <person name="Azoury J."/>
            <person name="Lee K.W."/>
            <person name="Georget V."/>
            <person name="Rassinier P."/>
            <person name="Leader B."/>
            <person name="Verlhac M.H."/>
        </authorList>
    </citation>
    <scope>FUNCTION</scope>
</reference>
<reference key="6">
    <citation type="journal article" date="2008" name="Curr. Biol.">
        <title>A new model for asymmetric spindle positioning in mouse oocytes.</title>
        <authorList>
            <person name="Schuh M."/>
            <person name="Ellenberg J."/>
        </authorList>
    </citation>
    <scope>FUNCTION</scope>
    <scope>TISSUE SPECIFICITY</scope>
    <scope>SUBCELLULAR LOCATION</scope>
</reference>
<reference key="7">
    <citation type="journal article" date="2010" name="Cell">
        <title>A tissue-specific atlas of mouse protein phosphorylation and expression.</title>
        <authorList>
            <person name="Huttlin E.L."/>
            <person name="Jedrychowski M.P."/>
            <person name="Elias J.E."/>
            <person name="Goswami T."/>
            <person name="Rad R."/>
            <person name="Beausoleil S.A."/>
            <person name="Villen J."/>
            <person name="Haas W."/>
            <person name="Sowa M.E."/>
            <person name="Gygi S.P."/>
        </authorList>
    </citation>
    <scope>PHOSPHORYLATION [LARGE SCALE ANALYSIS] AT SER-89; SER-459; SER-489 AND SER-493</scope>
    <scope>IDENTIFICATION BY MASS SPECTROMETRY [LARGE SCALE ANALYSIS]</scope>
    <source>
        <tissue>Brain</tissue>
        <tissue>Spleen</tissue>
    </source>
</reference>
<reference key="8">
    <citation type="journal article" date="2011" name="Curr. Biol.">
        <title>Spire-type actin nucleators cooperate with Formin-2 to drive asymmetric oocyte division.</title>
        <authorList>
            <person name="Pfender S."/>
            <person name="Kuznetsov V."/>
            <person name="Pleiser S."/>
            <person name="Kerkhoff E."/>
            <person name="Schuh M."/>
        </authorList>
    </citation>
    <scope>FUNCTION</scope>
    <scope>SUBCELLULAR LOCATION</scope>
</reference>
<reference key="9">
    <citation type="journal article" date="2011" name="J. Biol. Chem.">
        <title>Molecular basis of actin nucleation factor cooperativity: crystal structure of the Spir-1 kinase non-catalytic C-lobe domain (KIND)*formin-2 formin SPIR interaction motif (FSI) complex.</title>
        <authorList>
            <person name="Zeth K."/>
            <person name="Pechlivanis M."/>
            <person name="Samol A."/>
            <person name="Pleiser S."/>
            <person name="Vonrhein C."/>
            <person name="Kerkhoff E."/>
        </authorList>
    </citation>
    <scope>INTERACTION WITH SPIRE1</scope>
    <scope>SUBCELLULAR LOCATION</scope>
    <scope>MUTAGENESIS OF LYS-1571</scope>
</reference>
<reference key="10">
    <citation type="journal article" date="2011" name="Nat. Cell Biol.">
        <title>An actin-dependent mechanism for long-range vesicle transport.</title>
        <authorList>
            <person name="Schuh M."/>
        </authorList>
    </citation>
    <scope>FUNCTION</scope>
    <scope>SUBCELLULAR LOCATION</scope>
</reference>
<keyword id="KW-0009">Actin-binding</keyword>
<keyword id="KW-1003">Cell membrane</keyword>
<keyword id="KW-0175">Coiled coil</keyword>
<keyword id="KW-0963">Cytoplasm</keyword>
<keyword id="KW-0968">Cytoplasmic vesicle</keyword>
<keyword id="KW-0206">Cytoskeleton</keyword>
<keyword id="KW-0217">Developmental protein</keyword>
<keyword id="KW-0227">DNA damage</keyword>
<keyword id="KW-0472">Membrane</keyword>
<keyword id="KW-0539">Nucleus</keyword>
<keyword id="KW-0597">Phosphoprotein</keyword>
<keyword id="KW-0653">Protein transport</keyword>
<keyword id="KW-1185">Reference proteome</keyword>
<keyword id="KW-0677">Repeat</keyword>
<keyword id="KW-0346">Stress response</keyword>
<keyword id="KW-0813">Transport</keyword>